<organism>
    <name type="scientific">Methanococcus aeolicus (strain ATCC BAA-1280 / DSM 17508 / OCM 812 / Nankai-3)</name>
    <dbReference type="NCBI Taxonomy" id="419665"/>
    <lineage>
        <taxon>Archaea</taxon>
        <taxon>Methanobacteriati</taxon>
        <taxon>Methanobacteriota</taxon>
        <taxon>Methanomada group</taxon>
        <taxon>Methanococci</taxon>
        <taxon>Methanococcales</taxon>
        <taxon>Methanococcaceae</taxon>
        <taxon>Methanococcus</taxon>
    </lineage>
</organism>
<reference key="1">
    <citation type="submission" date="2007-06" db="EMBL/GenBank/DDBJ databases">
        <title>Complete sequence of Methanococcus aeolicus Nankai-3.</title>
        <authorList>
            <consortium name="US DOE Joint Genome Institute"/>
            <person name="Copeland A."/>
            <person name="Lucas S."/>
            <person name="Lapidus A."/>
            <person name="Barry K."/>
            <person name="Glavina del Rio T."/>
            <person name="Dalin E."/>
            <person name="Tice H."/>
            <person name="Pitluck S."/>
            <person name="Chain P."/>
            <person name="Malfatti S."/>
            <person name="Shin M."/>
            <person name="Vergez L."/>
            <person name="Schmutz J."/>
            <person name="Larimer F."/>
            <person name="Land M."/>
            <person name="Hauser L."/>
            <person name="Kyrpides N."/>
            <person name="Lykidis A."/>
            <person name="Sieprawska-Lupa M."/>
            <person name="Whitman W.B."/>
            <person name="Richardson P."/>
        </authorList>
    </citation>
    <scope>NUCLEOTIDE SEQUENCE [LARGE SCALE GENOMIC DNA]</scope>
    <source>
        <strain>ATCC BAA-1280 / DSM 17508 / OCM 812 / Nankai-3</strain>
    </source>
</reference>
<keyword id="KW-0648">Protein biosynthesis</keyword>
<keyword id="KW-0663">Pyridoxal phosphate</keyword>
<keyword id="KW-0808">Transferase</keyword>
<proteinExistence type="inferred from homology"/>
<sequence length="385" mass="43616">MDELNINFDKYKNIRRTMGRELIDLNPIQRGGELPVESKKAIYEYWDGYSVCDYCGGRLDKVETPPICEYLHDVSKFLGMDFTRPTHGARESKFIVMHSVCNEGDFVVLDGNAHYTSFVALERAKLNSEIVEHDGYPTFRVNPEKYAEVIDNLEDKNKPIGLILLTHVDGNYGNLADAEKVGKIAKQKGYPFLLNCAYSVGRLPVNGKKLNADFLAISGHKSMASASPCGLVSIKGEYADKVFRTSKTHPVKEIEMLGCTSRGAPLISLMASFSHVAERVKNWDNEVKKTRFVVDELEKIGFNQLGIKPKQHDLIKFETPILDEIAQKDKRRGYFFYEELKKRGIGGIKRGTTKEIKMSVYGLSWEQVRYVVDNIKEIVEQGNNI</sequence>
<dbReference type="EC" id="2.5.1.73" evidence="1"/>
<dbReference type="EMBL" id="CP000743">
    <property type="protein sequence ID" value="ABR56265.1"/>
    <property type="molecule type" value="Genomic_DNA"/>
</dbReference>
<dbReference type="RefSeq" id="WP_011973397.1">
    <property type="nucleotide sequence ID" value="NC_009635.1"/>
</dbReference>
<dbReference type="SMR" id="A6UUU3"/>
<dbReference type="STRING" id="419665.Maeo_0681"/>
<dbReference type="GeneID" id="5326269"/>
<dbReference type="KEGG" id="mae:Maeo_0681"/>
<dbReference type="eggNOG" id="arCOG00091">
    <property type="taxonomic scope" value="Archaea"/>
</dbReference>
<dbReference type="HOGENOM" id="CLU_060476_0_0_2"/>
<dbReference type="OrthoDB" id="5817at2157"/>
<dbReference type="Proteomes" id="UP000001106">
    <property type="component" value="Chromosome"/>
</dbReference>
<dbReference type="GO" id="GO:0043766">
    <property type="term" value="F:Sep-tRNA:Cys-tRNA synthase activity"/>
    <property type="evidence" value="ECO:0007669"/>
    <property type="project" value="UniProtKB-UniRule"/>
</dbReference>
<dbReference type="GO" id="GO:0006412">
    <property type="term" value="P:translation"/>
    <property type="evidence" value="ECO:0007669"/>
    <property type="project" value="UniProtKB-KW"/>
</dbReference>
<dbReference type="Gene3D" id="3.90.1150.10">
    <property type="entry name" value="Aspartate Aminotransferase, domain 1"/>
    <property type="match status" value="1"/>
</dbReference>
<dbReference type="Gene3D" id="3.40.640.10">
    <property type="entry name" value="Type I PLP-dependent aspartate aminotransferase-like (Major domain)"/>
    <property type="match status" value="1"/>
</dbReference>
<dbReference type="HAMAP" id="MF_01675">
    <property type="entry name" value="Sep_Cys_tRNA_synth"/>
    <property type="match status" value="1"/>
</dbReference>
<dbReference type="InterPro" id="IPR015424">
    <property type="entry name" value="PyrdxlP-dep_Trfase"/>
</dbReference>
<dbReference type="InterPro" id="IPR015421">
    <property type="entry name" value="PyrdxlP-dep_Trfase_major"/>
</dbReference>
<dbReference type="InterPro" id="IPR015422">
    <property type="entry name" value="PyrdxlP-dep_Trfase_small"/>
</dbReference>
<dbReference type="InterPro" id="IPR013375">
    <property type="entry name" value="Sep_Cys-tRNA_synth_arc"/>
</dbReference>
<dbReference type="InterPro" id="IPR008829">
    <property type="entry name" value="SepSecS/SepCysS"/>
</dbReference>
<dbReference type="NCBIfam" id="NF006810">
    <property type="entry name" value="PRK09331.1"/>
    <property type="match status" value="1"/>
</dbReference>
<dbReference type="NCBIfam" id="TIGR02539">
    <property type="entry name" value="SepCysS"/>
    <property type="match status" value="1"/>
</dbReference>
<dbReference type="Pfam" id="PF05889">
    <property type="entry name" value="SepSecS"/>
    <property type="match status" value="1"/>
</dbReference>
<dbReference type="SUPFAM" id="SSF53383">
    <property type="entry name" value="PLP-dependent transferases"/>
    <property type="match status" value="1"/>
</dbReference>
<name>SPSS_META3</name>
<protein>
    <recommendedName>
        <fullName evidence="1">O-phospho-L-seryl-tRNA:Cys-tRNA synthase</fullName>
        <ecNumber evidence="1">2.5.1.73</ecNumber>
    </recommendedName>
    <alternativeName>
        <fullName evidence="1">Sep-tRNA:Cys-tRNA synthase</fullName>
        <shortName evidence="1">SepCysS</shortName>
    </alternativeName>
</protein>
<feature type="chain" id="PRO_0000359447" description="O-phospho-L-seryl-tRNA:Cys-tRNA synthase">
    <location>
        <begin position="1"/>
        <end position="385"/>
    </location>
</feature>
<feature type="binding site" evidence="1">
    <location>
        <begin position="89"/>
        <end position="90"/>
    </location>
    <ligand>
        <name>pyridoxal 5'-phosphate</name>
        <dbReference type="ChEBI" id="CHEBI:597326"/>
    </ligand>
</feature>
<feature type="binding site" evidence="1">
    <location>
        <position position="195"/>
    </location>
    <ligand>
        <name>pyridoxal 5'-phosphate</name>
        <dbReference type="ChEBI" id="CHEBI:597326"/>
    </ligand>
</feature>
<feature type="binding site" evidence="1">
    <location>
        <begin position="218"/>
        <end position="220"/>
    </location>
    <ligand>
        <name>pyridoxal 5'-phosphate</name>
        <dbReference type="ChEBI" id="CHEBI:597326"/>
    </ligand>
</feature>
<feature type="modified residue" description="N6-(pyridoxal phosphate)lysine" evidence="1">
    <location>
        <position position="221"/>
    </location>
</feature>
<evidence type="ECO:0000255" key="1">
    <source>
        <dbReference type="HAMAP-Rule" id="MF_01675"/>
    </source>
</evidence>
<comment type="function">
    <text evidence="1">Converts O-phospho-L-seryl-tRNA(Cys) (Sep-tRNA(Cys)) to L-cysteinyl-tRNA(Cys) (Cys-tRNA(Cys)).</text>
</comment>
<comment type="catalytic activity">
    <reaction evidence="1">
        <text>O-phospho-L-seryl-tRNA(Cys) + hydrogen sulfide + H(+) = L-cysteinyl-tRNA(Cys) + phosphate</text>
        <dbReference type="Rhea" id="RHEA:25686"/>
        <dbReference type="Rhea" id="RHEA-COMP:9679"/>
        <dbReference type="Rhea" id="RHEA-COMP:9719"/>
        <dbReference type="ChEBI" id="CHEBI:15378"/>
        <dbReference type="ChEBI" id="CHEBI:29919"/>
        <dbReference type="ChEBI" id="CHEBI:43474"/>
        <dbReference type="ChEBI" id="CHEBI:78517"/>
        <dbReference type="ChEBI" id="CHEBI:78551"/>
        <dbReference type="EC" id="2.5.1.73"/>
    </reaction>
</comment>
<comment type="cofactor">
    <cofactor evidence="1">
        <name>pyridoxal 5'-phosphate</name>
        <dbReference type="ChEBI" id="CHEBI:597326"/>
    </cofactor>
</comment>
<comment type="subunit">
    <text evidence="1">Homodimer. Interacts with SepRS.</text>
</comment>
<comment type="similarity">
    <text evidence="1">Belongs to the SepCysS family.</text>
</comment>
<accession>A6UUU3</accession>
<gene>
    <name type="ordered locus">Maeo_0681</name>
</gene>